<dbReference type="EMBL" id="CP000770">
    <property type="protein sequence ID" value="ABS30570.1"/>
    <property type="molecule type" value="Genomic_DNA"/>
</dbReference>
<dbReference type="SMR" id="A8Z619"/>
<dbReference type="STRING" id="444179.SMGWSS_167"/>
<dbReference type="KEGG" id="smg:SMGWSS_167"/>
<dbReference type="HOGENOM" id="CLU_095424_4_1_10"/>
<dbReference type="Proteomes" id="UP000000781">
    <property type="component" value="Chromosome"/>
</dbReference>
<dbReference type="GO" id="GO:1990904">
    <property type="term" value="C:ribonucleoprotein complex"/>
    <property type="evidence" value="ECO:0007669"/>
    <property type="project" value="UniProtKB-KW"/>
</dbReference>
<dbReference type="GO" id="GO:0005840">
    <property type="term" value="C:ribosome"/>
    <property type="evidence" value="ECO:0007669"/>
    <property type="project" value="UniProtKB-KW"/>
</dbReference>
<dbReference type="GO" id="GO:0003735">
    <property type="term" value="F:structural constituent of ribosome"/>
    <property type="evidence" value="ECO:0007669"/>
    <property type="project" value="InterPro"/>
</dbReference>
<dbReference type="GO" id="GO:0006412">
    <property type="term" value="P:translation"/>
    <property type="evidence" value="ECO:0007669"/>
    <property type="project" value="UniProtKB-UniRule"/>
</dbReference>
<dbReference type="FunFam" id="2.40.50.100:FF:000020">
    <property type="entry name" value="50S ribosomal protein L27"/>
    <property type="match status" value="1"/>
</dbReference>
<dbReference type="Gene3D" id="2.40.50.100">
    <property type="match status" value="1"/>
</dbReference>
<dbReference type="HAMAP" id="MF_00539">
    <property type="entry name" value="Ribosomal_bL27"/>
    <property type="match status" value="1"/>
</dbReference>
<dbReference type="InterPro" id="IPR001684">
    <property type="entry name" value="Ribosomal_bL27"/>
</dbReference>
<dbReference type="NCBIfam" id="TIGR00062">
    <property type="entry name" value="L27"/>
    <property type="match status" value="1"/>
</dbReference>
<dbReference type="PANTHER" id="PTHR15893:SF0">
    <property type="entry name" value="LARGE RIBOSOMAL SUBUNIT PROTEIN BL27M"/>
    <property type="match status" value="1"/>
</dbReference>
<dbReference type="PANTHER" id="PTHR15893">
    <property type="entry name" value="RIBOSOMAL PROTEIN L27"/>
    <property type="match status" value="1"/>
</dbReference>
<dbReference type="Pfam" id="PF01016">
    <property type="entry name" value="Ribosomal_L27"/>
    <property type="match status" value="1"/>
</dbReference>
<dbReference type="PRINTS" id="PR00063">
    <property type="entry name" value="RIBOSOMALL27"/>
</dbReference>
<dbReference type="SUPFAM" id="SSF110324">
    <property type="entry name" value="Ribosomal L27 protein-like"/>
    <property type="match status" value="1"/>
</dbReference>
<gene>
    <name evidence="1" type="primary">rpmA</name>
    <name type="ordered locus">SMGWSS_167</name>
</gene>
<name>RL27_KARMG</name>
<comment type="similarity">
    <text evidence="1">Belongs to the bacterial ribosomal protein bL27 family.</text>
</comment>
<keyword id="KW-0687">Ribonucleoprotein</keyword>
<keyword id="KW-0689">Ribosomal protein</keyword>
<proteinExistence type="inferred from homology"/>
<evidence type="ECO:0000255" key="1">
    <source>
        <dbReference type="HAMAP-Rule" id="MF_00539"/>
    </source>
</evidence>
<evidence type="ECO:0000305" key="2"/>
<reference key="1">
    <citation type="journal article" date="2007" name="Proc. Natl. Acad. Sci. U.S.A.">
        <title>Parallel genomic evolution and metabolic interdependence in an ancient symbiosis.</title>
        <authorList>
            <person name="McCutcheon J.P."/>
            <person name="Moran N.A."/>
        </authorList>
    </citation>
    <scope>NUCLEOTIDE SEQUENCE [LARGE SCALE GENOMIC DNA]</scope>
    <source>
        <strain>GWSS</strain>
    </source>
</reference>
<feature type="chain" id="PRO_1000081919" description="Large ribosomal subunit protein bL27">
    <location>
        <begin position="1"/>
        <end position="84"/>
    </location>
</feature>
<sequence length="84" mass="9398">MAHKKGVGSSRNGRDSFSKRLGVKLFGGQIAKPGSIIIRQRGTKHHPKKNVYMGKDHTIHSLIYGKILFKKTNKKKSFISVIPI</sequence>
<protein>
    <recommendedName>
        <fullName evidence="1">Large ribosomal subunit protein bL27</fullName>
    </recommendedName>
    <alternativeName>
        <fullName evidence="2">50S ribosomal protein L27</fullName>
    </alternativeName>
</protein>
<organism>
    <name type="scientific">Karelsulcia muelleri (strain GWSS)</name>
    <name type="common">Sulcia muelleri</name>
    <dbReference type="NCBI Taxonomy" id="444179"/>
    <lineage>
        <taxon>Bacteria</taxon>
        <taxon>Pseudomonadati</taxon>
        <taxon>Bacteroidota</taxon>
        <taxon>Flavobacteriia</taxon>
        <taxon>Flavobacteriales</taxon>
        <taxon>Candidatus Karelsulcia</taxon>
    </lineage>
</organism>
<accession>A8Z619</accession>